<reference key="1">
    <citation type="journal article" date="1991" name="J. Virol.">
        <title>Evolution of influenza A virus nucleoprotein genes: implications for the origins of H1N1 human and classical swine viruses.</title>
        <authorList>
            <person name="Gorman O.T."/>
            <person name="Bean W.J."/>
            <person name="Kawaoka Y."/>
            <person name="Donatelli I."/>
            <person name="Guo Y."/>
            <person name="Webster R.G."/>
        </authorList>
    </citation>
    <scope>NUCLEOTIDE SEQUENCE [GENOMIC RNA]</scope>
</reference>
<dbReference type="EMBL" id="M63773">
    <property type="protein sequence ID" value="AAA52234.1"/>
    <property type="molecule type" value="Genomic_RNA"/>
</dbReference>
<dbReference type="SMR" id="P26055"/>
<dbReference type="GO" id="GO:0019029">
    <property type="term" value="C:helical viral capsid"/>
    <property type="evidence" value="ECO:0007669"/>
    <property type="project" value="UniProtKB-UniRule"/>
</dbReference>
<dbReference type="GO" id="GO:0043657">
    <property type="term" value="C:host cell"/>
    <property type="evidence" value="ECO:0007669"/>
    <property type="project" value="GOC"/>
</dbReference>
<dbReference type="GO" id="GO:0042025">
    <property type="term" value="C:host cell nucleus"/>
    <property type="evidence" value="ECO:0007669"/>
    <property type="project" value="UniProtKB-SubCell"/>
</dbReference>
<dbReference type="GO" id="GO:1990904">
    <property type="term" value="C:ribonucleoprotein complex"/>
    <property type="evidence" value="ECO:0007669"/>
    <property type="project" value="UniProtKB-KW"/>
</dbReference>
<dbReference type="GO" id="GO:0019013">
    <property type="term" value="C:viral nucleocapsid"/>
    <property type="evidence" value="ECO:0007669"/>
    <property type="project" value="UniProtKB-UniRule"/>
</dbReference>
<dbReference type="GO" id="GO:0003723">
    <property type="term" value="F:RNA binding"/>
    <property type="evidence" value="ECO:0007669"/>
    <property type="project" value="UniProtKB-UniRule"/>
</dbReference>
<dbReference type="GO" id="GO:0005198">
    <property type="term" value="F:structural molecule activity"/>
    <property type="evidence" value="ECO:0007669"/>
    <property type="project" value="UniProtKB-UniRule"/>
</dbReference>
<dbReference type="GO" id="GO:0046718">
    <property type="term" value="P:symbiont entry into host cell"/>
    <property type="evidence" value="ECO:0007669"/>
    <property type="project" value="UniProtKB-KW"/>
</dbReference>
<dbReference type="GO" id="GO:0075732">
    <property type="term" value="P:viral penetration into host nucleus"/>
    <property type="evidence" value="ECO:0007669"/>
    <property type="project" value="UniProtKB-UniRule"/>
</dbReference>
<dbReference type="HAMAP" id="MF_04070">
    <property type="entry name" value="INFV_NCAP"/>
    <property type="match status" value="1"/>
</dbReference>
<dbReference type="InterPro" id="IPR002141">
    <property type="entry name" value="Flu_NP"/>
</dbReference>
<dbReference type="Pfam" id="PF00506">
    <property type="entry name" value="Flu_NP"/>
    <property type="match status" value="1"/>
</dbReference>
<dbReference type="SUPFAM" id="SSF161003">
    <property type="entry name" value="flu NP-like"/>
    <property type="match status" value="1"/>
</dbReference>
<accession>P26055</accession>
<name>NCAP_I53A0</name>
<keyword id="KW-0167">Capsid protein</keyword>
<keyword id="KW-1139">Helical capsid protein</keyword>
<keyword id="KW-1048">Host nucleus</keyword>
<keyword id="KW-0945">Host-virus interaction</keyword>
<keyword id="KW-0687">Ribonucleoprotein</keyword>
<keyword id="KW-0694">RNA-binding</keyword>
<keyword id="KW-0543">Viral nucleoprotein</keyword>
<keyword id="KW-1163">Viral penetration into host nucleus</keyword>
<keyword id="KW-0946">Virion</keyword>
<keyword id="KW-1160">Virus entry into host cell</keyword>
<sequence>MASQGTKRSYEQMETGGERQNATEIRASVGRMVGGIGRFYIQMCTELKLSDYEGRLIQNSITIERMILSAFDERRNKYLEEHPSAGKDPKKTGGPIYRRRDGKWMRELILYDKEEIRRIWRQANNGEDATAGLTHLMIWHSNLNDATYQRTRALVRTGMDPRMCSLMQGSTLPRRSGAAGAAVKGVGTMVMELIRMIKRGINDRNFWRGENGRRTRIAYERMCNILKGKFQTAAQRAMMDQVRESRNPGNAEIEDLIFLARSALILRGSVAHKSCLPACVYGLAVASGYDFEREGYSLVGIDPFRLLQNSQVFSLIRPNENPAHKSQLVWMACHSAAFEDLRVSSFIRGTRVVPRGQMSTRGVQIASNENMETMDSSTLELRSRYWAIRTRSGGNTNQQRASAGQISVQPTFSVQRNLPFERATIMAAFTGNTEGRTSDMRTEIIRMMENARPEDVSFQGRGVFELSDEKATNPIVPSFDMSNEGSYFFGDNAEEYDN</sequence>
<protein>
    <recommendedName>
        <fullName evidence="1">Nucleoprotein</fullName>
    </recommendedName>
    <alternativeName>
        <fullName evidence="1">Nucleocapsid protein</fullName>
        <shortName evidence="1">Protein N</shortName>
    </alternativeName>
</protein>
<gene>
    <name evidence="1" type="primary">NP</name>
</gene>
<comment type="function">
    <text evidence="1">Encapsidates the negative strand viral RNA, protecting it from nucleases. The encapsidated genomic RNA is termed the ribonucleoprotein (RNP) and serves as template for transcription and replication. The RNP needs to be localized in the host nucleus to start an infectious cycle, but is too large to diffuse through the nuclear pore complex. NP comprises at least 2 nuclear localization signals that are responsible for the active RNP import into the nucleus through cellular importin alpha/beta pathway. Later in the infection, nclear export of RNPs are mediated through viral proteins NEP interacting with M1 which binds nucleoproteins. It is possible that nucleoprotein binds directly host exportin-1/XPO1 and plays an active role in RNPs nuclear export. M1 interaction with RNP seems to hide nucleoprotein's nuclear localization signals. Soon after a virion infects a new cell, M1 dissociates from the RNP under acidification of the virion driven by M2 protein. Dissociation of M1 from RNP unmasks nucleoprotein's nuclear localization signals, targeting the RNP to the nucleus.</text>
</comment>
<comment type="subunit">
    <text evidence="1">Homomultimerizes to form the nucleocapsid. May bind host exportin-1/XPO1. Binds to viral genomic RNA. Protein-RNA contacts are mediated by a combination of electrostatic interactions between positively charged residues and the phosphate backbone and planar interactions between aromatic side chains and bases.</text>
</comment>
<comment type="subcellular location">
    <subcellularLocation>
        <location evidence="1">Virion</location>
    </subcellularLocation>
    <subcellularLocation>
        <location evidence="1">Host nucleus</location>
    </subcellularLocation>
</comment>
<comment type="PTM">
    <text evidence="1">Late in virus-infected cells, may be cleaved from a 56-kDa protein to a 53-kDa protein by a cellular caspase. This cleavage might be a marker for the onset of apoptosis in infected cells or have a specific function in virus host interaction.</text>
</comment>
<comment type="similarity">
    <text evidence="1">Belongs to the influenza viruses nucleoprotein family.</text>
</comment>
<organismHost>
    <name type="scientific">Anatidae</name>
    <name type="common">waterfowl</name>
    <dbReference type="NCBI Taxonomy" id="8830"/>
</organismHost>
<organismHost>
    <name type="scientific">Gallus gallus</name>
    <name type="common">Chicken</name>
    <dbReference type="NCBI Taxonomy" id="9031"/>
</organismHost>
<feature type="chain" id="PRO_0000079039" description="Nucleoprotein">
    <location>
        <begin position="1"/>
        <end position="498"/>
    </location>
</feature>
<feature type="region of interest" description="Disordered" evidence="2">
    <location>
        <begin position="1"/>
        <end position="21"/>
    </location>
</feature>
<feature type="short sequence motif" description="Unconventional nuclear localization signal" evidence="1">
    <location>
        <begin position="1"/>
        <end position="18"/>
    </location>
</feature>
<feature type="short sequence motif" description="Bipartite nuclear localization signal" evidence="1">
    <location>
        <begin position="198"/>
        <end position="216"/>
    </location>
</feature>
<proteinExistence type="inferred from homology"/>
<evidence type="ECO:0000255" key="1">
    <source>
        <dbReference type="HAMAP-Rule" id="MF_04070"/>
    </source>
</evidence>
<evidence type="ECO:0000256" key="2">
    <source>
        <dbReference type="SAM" id="MobiDB-lite"/>
    </source>
</evidence>
<organism>
    <name type="scientific">Influenza A virus (strain A/Duck/Manitoba/1/1953 H10N7)</name>
    <dbReference type="NCBI Taxonomy" id="383555"/>
    <lineage>
        <taxon>Viruses</taxon>
        <taxon>Riboviria</taxon>
        <taxon>Orthornavirae</taxon>
        <taxon>Negarnaviricota</taxon>
        <taxon>Polyploviricotina</taxon>
        <taxon>Insthoviricetes</taxon>
        <taxon>Articulavirales</taxon>
        <taxon>Orthomyxoviridae</taxon>
        <taxon>Alphainfluenzavirus</taxon>
        <taxon>Alphainfluenzavirus influenzae</taxon>
        <taxon>Influenza A virus</taxon>
    </lineage>
</organism>